<proteinExistence type="inferred from homology"/>
<keyword id="KW-0547">Nucleotide-binding</keyword>
<keyword id="KW-1185">Reference proteome</keyword>
<evidence type="ECO:0000255" key="1">
    <source>
        <dbReference type="HAMAP-Rule" id="MF_00632"/>
    </source>
</evidence>
<gene>
    <name type="ordered locus">VF_1240</name>
</gene>
<dbReference type="EMBL" id="CP000020">
    <property type="protein sequence ID" value="AAW85735.1"/>
    <property type="molecule type" value="Genomic_DNA"/>
</dbReference>
<dbReference type="RefSeq" id="WP_005419131.1">
    <property type="nucleotide sequence ID" value="NZ_CAWLES010000001.1"/>
</dbReference>
<dbReference type="RefSeq" id="YP_204623.1">
    <property type="nucleotide sequence ID" value="NC_006840.2"/>
</dbReference>
<dbReference type="SMR" id="Q5E5G1"/>
<dbReference type="STRING" id="312309.VF_1240"/>
<dbReference type="EnsemblBacteria" id="AAW85735">
    <property type="protein sequence ID" value="AAW85735"/>
    <property type="gene ID" value="VF_1240"/>
</dbReference>
<dbReference type="GeneID" id="54163911"/>
<dbReference type="KEGG" id="vfi:VF_1240"/>
<dbReference type="PATRIC" id="fig|312309.11.peg.1247"/>
<dbReference type="eggNOG" id="COG1666">
    <property type="taxonomic scope" value="Bacteria"/>
</dbReference>
<dbReference type="HOGENOM" id="CLU_099839_1_0_6"/>
<dbReference type="OrthoDB" id="9801447at2"/>
<dbReference type="Proteomes" id="UP000000537">
    <property type="component" value="Chromosome I"/>
</dbReference>
<dbReference type="GO" id="GO:0005829">
    <property type="term" value="C:cytosol"/>
    <property type="evidence" value="ECO:0007669"/>
    <property type="project" value="TreeGrafter"/>
</dbReference>
<dbReference type="GO" id="GO:0000166">
    <property type="term" value="F:nucleotide binding"/>
    <property type="evidence" value="ECO:0007669"/>
    <property type="project" value="TreeGrafter"/>
</dbReference>
<dbReference type="CDD" id="cd11740">
    <property type="entry name" value="YajQ_like"/>
    <property type="match status" value="1"/>
</dbReference>
<dbReference type="FunFam" id="3.30.70.860:FF:000001">
    <property type="entry name" value="UPF0234 protein YajQ"/>
    <property type="match status" value="1"/>
</dbReference>
<dbReference type="FunFam" id="3.30.70.990:FF:000001">
    <property type="entry name" value="UPF0234 protein YajQ"/>
    <property type="match status" value="1"/>
</dbReference>
<dbReference type="Gene3D" id="3.30.70.860">
    <property type="match status" value="1"/>
</dbReference>
<dbReference type="Gene3D" id="3.30.70.990">
    <property type="entry name" value="YajQ-like, domain 2"/>
    <property type="match status" value="1"/>
</dbReference>
<dbReference type="HAMAP" id="MF_00632">
    <property type="entry name" value="YajQ"/>
    <property type="match status" value="1"/>
</dbReference>
<dbReference type="InterPro" id="IPR007551">
    <property type="entry name" value="DUF520"/>
</dbReference>
<dbReference type="InterPro" id="IPR035571">
    <property type="entry name" value="UPF0234-like_C"/>
</dbReference>
<dbReference type="InterPro" id="IPR035570">
    <property type="entry name" value="UPF0234_N"/>
</dbReference>
<dbReference type="InterPro" id="IPR036183">
    <property type="entry name" value="YajQ-like_sf"/>
</dbReference>
<dbReference type="NCBIfam" id="NF003819">
    <property type="entry name" value="PRK05412.1"/>
    <property type="match status" value="1"/>
</dbReference>
<dbReference type="PANTHER" id="PTHR30476">
    <property type="entry name" value="UPF0234 PROTEIN YAJQ"/>
    <property type="match status" value="1"/>
</dbReference>
<dbReference type="PANTHER" id="PTHR30476:SF0">
    <property type="entry name" value="UPF0234 PROTEIN YAJQ"/>
    <property type="match status" value="1"/>
</dbReference>
<dbReference type="Pfam" id="PF04461">
    <property type="entry name" value="DUF520"/>
    <property type="match status" value="1"/>
</dbReference>
<dbReference type="SUPFAM" id="SSF89963">
    <property type="entry name" value="YajQ-like"/>
    <property type="match status" value="2"/>
</dbReference>
<feature type="chain" id="PRO_0000261987" description="Nucleotide-binding protein VF_1240">
    <location>
        <begin position="1"/>
        <end position="160"/>
    </location>
</feature>
<comment type="function">
    <text evidence="1">Nucleotide-binding protein.</text>
</comment>
<comment type="similarity">
    <text evidence="1">Belongs to the YajQ family.</text>
</comment>
<reference key="1">
    <citation type="journal article" date="2005" name="Proc. Natl. Acad. Sci. U.S.A.">
        <title>Complete genome sequence of Vibrio fischeri: a symbiotic bacterium with pathogenic congeners.</title>
        <authorList>
            <person name="Ruby E.G."/>
            <person name="Urbanowski M."/>
            <person name="Campbell J."/>
            <person name="Dunn A."/>
            <person name="Faini M."/>
            <person name="Gunsalus R."/>
            <person name="Lostroh P."/>
            <person name="Lupp C."/>
            <person name="McCann J."/>
            <person name="Millikan D."/>
            <person name="Schaefer A."/>
            <person name="Stabb E."/>
            <person name="Stevens A."/>
            <person name="Visick K."/>
            <person name="Whistler C."/>
            <person name="Greenberg E.P."/>
        </authorList>
    </citation>
    <scope>NUCLEOTIDE SEQUENCE [LARGE SCALE GENOMIC DNA]</scope>
    <source>
        <strain>ATCC 700601 / ES114</strain>
    </source>
</reference>
<sequence length="160" mass="17992">MPAFDIVSEVDNVELKNAVDNATRELATRFDFRGVDASFELKGENIKIKAEDDFQLSQLVDILRGNLAKRGVDARAMDIKDAVHSGKNFYQDIDFKQGVDTLIAKKLVKEIKASKIKVQAAIQGEQLRITGKKRDDLQAVMALVREGDFGQPFQFTNFRD</sequence>
<accession>Q5E5G1</accession>
<protein>
    <recommendedName>
        <fullName evidence="1">Nucleotide-binding protein VF_1240</fullName>
    </recommendedName>
</protein>
<organism>
    <name type="scientific">Aliivibrio fischeri (strain ATCC 700601 / ES114)</name>
    <name type="common">Vibrio fischeri</name>
    <dbReference type="NCBI Taxonomy" id="312309"/>
    <lineage>
        <taxon>Bacteria</taxon>
        <taxon>Pseudomonadati</taxon>
        <taxon>Pseudomonadota</taxon>
        <taxon>Gammaproteobacteria</taxon>
        <taxon>Vibrionales</taxon>
        <taxon>Vibrionaceae</taxon>
        <taxon>Aliivibrio</taxon>
    </lineage>
</organism>
<name>Y1240_ALIF1</name>